<feature type="chain" id="PRO_1000018527" description="Indole-3-glycerol phosphate synthase">
    <location>
        <begin position="1"/>
        <end position="295"/>
    </location>
</feature>
<dbReference type="EC" id="4.1.1.48" evidence="1"/>
<dbReference type="EMBL" id="CP000551">
    <property type="protein sequence ID" value="ABM70779.1"/>
    <property type="molecule type" value="Genomic_DNA"/>
</dbReference>
<dbReference type="RefSeq" id="WP_011818915.1">
    <property type="nucleotide sequence ID" value="NC_008816.1"/>
</dbReference>
<dbReference type="SMR" id="A2BSL8"/>
<dbReference type="STRING" id="146891.A9601_14961"/>
<dbReference type="KEGG" id="pmb:A9601_14961"/>
<dbReference type="eggNOG" id="COG0134">
    <property type="taxonomic scope" value="Bacteria"/>
</dbReference>
<dbReference type="HOGENOM" id="CLU_034247_1_0_3"/>
<dbReference type="OrthoDB" id="9804217at2"/>
<dbReference type="UniPathway" id="UPA00035">
    <property type="reaction ID" value="UER00043"/>
</dbReference>
<dbReference type="Proteomes" id="UP000002590">
    <property type="component" value="Chromosome"/>
</dbReference>
<dbReference type="GO" id="GO:0004425">
    <property type="term" value="F:indole-3-glycerol-phosphate synthase activity"/>
    <property type="evidence" value="ECO:0007669"/>
    <property type="project" value="UniProtKB-UniRule"/>
</dbReference>
<dbReference type="GO" id="GO:0004640">
    <property type="term" value="F:phosphoribosylanthranilate isomerase activity"/>
    <property type="evidence" value="ECO:0007669"/>
    <property type="project" value="TreeGrafter"/>
</dbReference>
<dbReference type="GO" id="GO:0000162">
    <property type="term" value="P:L-tryptophan biosynthetic process"/>
    <property type="evidence" value="ECO:0007669"/>
    <property type="project" value="UniProtKB-UniRule"/>
</dbReference>
<dbReference type="CDD" id="cd00331">
    <property type="entry name" value="IGPS"/>
    <property type="match status" value="1"/>
</dbReference>
<dbReference type="FunFam" id="3.20.20.70:FF:000024">
    <property type="entry name" value="Indole-3-glycerol phosphate synthase"/>
    <property type="match status" value="1"/>
</dbReference>
<dbReference type="Gene3D" id="3.20.20.70">
    <property type="entry name" value="Aldolase class I"/>
    <property type="match status" value="1"/>
</dbReference>
<dbReference type="HAMAP" id="MF_00134_B">
    <property type="entry name" value="IGPS_B"/>
    <property type="match status" value="1"/>
</dbReference>
<dbReference type="InterPro" id="IPR013785">
    <property type="entry name" value="Aldolase_TIM"/>
</dbReference>
<dbReference type="InterPro" id="IPR045186">
    <property type="entry name" value="Indole-3-glycerol_P_synth"/>
</dbReference>
<dbReference type="InterPro" id="IPR013798">
    <property type="entry name" value="Indole-3-glycerol_P_synth_dom"/>
</dbReference>
<dbReference type="InterPro" id="IPR001468">
    <property type="entry name" value="Indole-3-GlycerolPSynthase_CS"/>
</dbReference>
<dbReference type="InterPro" id="IPR011060">
    <property type="entry name" value="RibuloseP-bd_barrel"/>
</dbReference>
<dbReference type="NCBIfam" id="NF001372">
    <property type="entry name" value="PRK00278.1-4"/>
    <property type="match status" value="1"/>
</dbReference>
<dbReference type="NCBIfam" id="NF001377">
    <property type="entry name" value="PRK00278.2-4"/>
    <property type="match status" value="1"/>
</dbReference>
<dbReference type="PANTHER" id="PTHR22854:SF2">
    <property type="entry name" value="INDOLE-3-GLYCEROL-PHOSPHATE SYNTHASE"/>
    <property type="match status" value="1"/>
</dbReference>
<dbReference type="PANTHER" id="PTHR22854">
    <property type="entry name" value="TRYPTOPHAN BIOSYNTHESIS PROTEIN"/>
    <property type="match status" value="1"/>
</dbReference>
<dbReference type="Pfam" id="PF00218">
    <property type="entry name" value="IGPS"/>
    <property type="match status" value="1"/>
</dbReference>
<dbReference type="SUPFAM" id="SSF51366">
    <property type="entry name" value="Ribulose-phoshate binding barrel"/>
    <property type="match status" value="1"/>
</dbReference>
<dbReference type="PROSITE" id="PS00614">
    <property type="entry name" value="IGPS"/>
    <property type="match status" value="1"/>
</dbReference>
<accession>A2BSL8</accession>
<proteinExistence type="inferred from homology"/>
<reference key="1">
    <citation type="journal article" date="2007" name="PLoS Genet.">
        <title>Patterns and implications of gene gain and loss in the evolution of Prochlorococcus.</title>
        <authorList>
            <person name="Kettler G.C."/>
            <person name="Martiny A.C."/>
            <person name="Huang K."/>
            <person name="Zucker J."/>
            <person name="Coleman M.L."/>
            <person name="Rodrigue S."/>
            <person name="Chen F."/>
            <person name="Lapidus A."/>
            <person name="Ferriera S."/>
            <person name="Johnson J."/>
            <person name="Steglich C."/>
            <person name="Church G.M."/>
            <person name="Richardson P."/>
            <person name="Chisholm S.W."/>
        </authorList>
    </citation>
    <scope>NUCLEOTIDE SEQUENCE [LARGE SCALE GENOMIC DNA]</scope>
    <source>
        <strain>AS9601</strain>
    </source>
</reference>
<keyword id="KW-0028">Amino-acid biosynthesis</keyword>
<keyword id="KW-0057">Aromatic amino acid biosynthesis</keyword>
<keyword id="KW-0210">Decarboxylase</keyword>
<keyword id="KW-0456">Lyase</keyword>
<keyword id="KW-0822">Tryptophan biosynthesis</keyword>
<comment type="catalytic activity">
    <reaction evidence="1">
        <text>1-(2-carboxyphenylamino)-1-deoxy-D-ribulose 5-phosphate + H(+) = (1S,2R)-1-C-(indol-3-yl)glycerol 3-phosphate + CO2 + H2O</text>
        <dbReference type="Rhea" id="RHEA:23476"/>
        <dbReference type="ChEBI" id="CHEBI:15377"/>
        <dbReference type="ChEBI" id="CHEBI:15378"/>
        <dbReference type="ChEBI" id="CHEBI:16526"/>
        <dbReference type="ChEBI" id="CHEBI:58613"/>
        <dbReference type="ChEBI" id="CHEBI:58866"/>
        <dbReference type="EC" id="4.1.1.48"/>
    </reaction>
</comment>
<comment type="pathway">
    <text evidence="1">Amino-acid biosynthesis; L-tryptophan biosynthesis; L-tryptophan from chorismate: step 4/5.</text>
</comment>
<comment type="similarity">
    <text evidence="1">Belongs to the TrpC family.</text>
</comment>
<evidence type="ECO:0000255" key="1">
    <source>
        <dbReference type="HAMAP-Rule" id="MF_00134"/>
    </source>
</evidence>
<gene>
    <name evidence="1" type="primary">trpC</name>
    <name type="ordered locus">A9601_14961</name>
</gene>
<protein>
    <recommendedName>
        <fullName evidence="1">Indole-3-glycerol phosphate synthase</fullName>
        <shortName evidence="1">IGPS</shortName>
        <ecNumber evidence="1">4.1.1.48</ecNumber>
    </recommendedName>
</protein>
<name>TRPC_PROMS</name>
<sequence length="295" mass="33628">MEIRRRPPNPTVRVENLEYAVPHREAQAKNILEEIVWHKDIEIKNFKKIVSLEDLIKKIENLPTPKDFYKNILESKIKPGVIAEIKKASPSKGVIRKDFNPENIAICYEGLGASCISVLTDKKFFQGSYEILETVRKSTNLPLLCKDFIISAYQIYKARVSGADAILLIAAILSDDDLIYLKKIADNLKMSVLVEVHNSYELERILKLKSFNLIGINNRDLKTFKTDLKTSKELMNTYADIFLKQNIIPISESGINCAEDLESLRSIGIMGVLIGETFMRETDIEQSFKKLFNSI</sequence>
<organism>
    <name type="scientific">Prochlorococcus marinus (strain AS9601)</name>
    <dbReference type="NCBI Taxonomy" id="146891"/>
    <lineage>
        <taxon>Bacteria</taxon>
        <taxon>Bacillati</taxon>
        <taxon>Cyanobacteriota</taxon>
        <taxon>Cyanophyceae</taxon>
        <taxon>Synechococcales</taxon>
        <taxon>Prochlorococcaceae</taxon>
        <taxon>Prochlorococcus</taxon>
    </lineage>
</organism>